<dbReference type="EMBL" id="AM942759">
    <property type="protein sequence ID" value="CAR41319.1"/>
    <property type="molecule type" value="Genomic_DNA"/>
</dbReference>
<dbReference type="RefSeq" id="WP_004244392.1">
    <property type="nucleotide sequence ID" value="NC_010554.1"/>
</dbReference>
<dbReference type="SMR" id="B4ESN7"/>
<dbReference type="EnsemblBacteria" id="CAR41319">
    <property type="protein sequence ID" value="CAR41319"/>
    <property type="gene ID" value="PMI0547"/>
</dbReference>
<dbReference type="GeneID" id="6803290"/>
<dbReference type="KEGG" id="pmr:PMI0547"/>
<dbReference type="eggNOG" id="COG3057">
    <property type="taxonomic scope" value="Bacteria"/>
</dbReference>
<dbReference type="HOGENOM" id="CLU_099733_0_0_6"/>
<dbReference type="Proteomes" id="UP000008319">
    <property type="component" value="Chromosome"/>
</dbReference>
<dbReference type="GO" id="GO:0005737">
    <property type="term" value="C:cytoplasm"/>
    <property type="evidence" value="ECO:0007669"/>
    <property type="project" value="UniProtKB-SubCell"/>
</dbReference>
<dbReference type="GO" id="GO:0043565">
    <property type="term" value="F:sequence-specific DNA binding"/>
    <property type="evidence" value="ECO:0007669"/>
    <property type="project" value="UniProtKB-ARBA"/>
</dbReference>
<dbReference type="GO" id="GO:0032297">
    <property type="term" value="P:negative regulation of DNA-templated DNA replication initiation"/>
    <property type="evidence" value="ECO:0007669"/>
    <property type="project" value="UniProtKB-UniRule"/>
</dbReference>
<dbReference type="GO" id="GO:0006355">
    <property type="term" value="P:regulation of DNA-templated transcription"/>
    <property type="evidence" value="ECO:0007669"/>
    <property type="project" value="InterPro"/>
</dbReference>
<dbReference type="Gene3D" id="1.10.1220.10">
    <property type="entry name" value="Met repressor-like"/>
    <property type="match status" value="1"/>
</dbReference>
<dbReference type="Gene3D" id="1.20.1380.10">
    <property type="entry name" value="Replication modulator SeqA, C-terminal DNA-binding domain"/>
    <property type="match status" value="1"/>
</dbReference>
<dbReference type="HAMAP" id="MF_00908">
    <property type="entry name" value="SeqA"/>
    <property type="match status" value="1"/>
</dbReference>
<dbReference type="InterPro" id="IPR013321">
    <property type="entry name" value="Arc_rbn_hlx_hlx"/>
</dbReference>
<dbReference type="InterPro" id="IPR010985">
    <property type="entry name" value="Ribbon_hlx_hlx"/>
</dbReference>
<dbReference type="InterPro" id="IPR005621">
    <property type="entry name" value="SeqA"/>
</dbReference>
<dbReference type="InterPro" id="IPR026577">
    <property type="entry name" value="SeqA_DNA-bd_C"/>
</dbReference>
<dbReference type="InterPro" id="IPR036835">
    <property type="entry name" value="SeqA_DNA-bd_C_sf"/>
</dbReference>
<dbReference type="InterPro" id="IPR033761">
    <property type="entry name" value="SeqA_N"/>
</dbReference>
<dbReference type="NCBIfam" id="NF008389">
    <property type="entry name" value="PRK11187.1"/>
    <property type="match status" value="1"/>
</dbReference>
<dbReference type="Pfam" id="PF03925">
    <property type="entry name" value="SeqA"/>
    <property type="match status" value="1"/>
</dbReference>
<dbReference type="Pfam" id="PF17206">
    <property type="entry name" value="SeqA_N"/>
    <property type="match status" value="1"/>
</dbReference>
<dbReference type="PIRSF" id="PIRSF019401">
    <property type="entry name" value="SeqA"/>
    <property type="match status" value="1"/>
</dbReference>
<dbReference type="SUPFAM" id="SSF82808">
    <property type="entry name" value="Replication modulator SeqA, C-terminal DNA-binding domain"/>
    <property type="match status" value="1"/>
</dbReference>
<dbReference type="SUPFAM" id="SSF47598">
    <property type="entry name" value="Ribbon-helix-helix"/>
    <property type="match status" value="1"/>
</dbReference>
<sequence length="183" mass="20761">MKKIEIDDELYRYIASETRHIGESASDILRRLLKLDAKQPVQPVVVTESVQAPVVKQDADLKPVAPAKNPVREMRELLLSDSYAEKTKSVDRFLQILSTLYSLDSATFTQSAETVHGRTRIYFAGDEKTLLDSGRHTKPRHIPGTPFWVITNSNTERKRTMVQSIMQDMQFPANEIDKVCGTI</sequence>
<comment type="function">
    <text evidence="1">Negative regulator of replication initiation, which contributes to regulation of DNA replication and ensures that replication initiation occurs exactly once per chromosome per cell cycle. Binds to pairs of hemimethylated GATC sequences in the oriC region, thus preventing assembly of replication proteins and re-initiation at newly replicated origins. Repression is relieved when the region becomes fully methylated.</text>
</comment>
<comment type="subunit">
    <text evidence="1">Homodimer. Polymerizes to form helical filaments.</text>
</comment>
<comment type="subcellular location">
    <subcellularLocation>
        <location evidence="1">Cytoplasm</location>
    </subcellularLocation>
</comment>
<comment type="similarity">
    <text evidence="1">Belongs to the SeqA family.</text>
</comment>
<evidence type="ECO:0000255" key="1">
    <source>
        <dbReference type="HAMAP-Rule" id="MF_00908"/>
    </source>
</evidence>
<name>SEQA_PROMH</name>
<organism>
    <name type="scientific">Proteus mirabilis (strain HI4320)</name>
    <dbReference type="NCBI Taxonomy" id="529507"/>
    <lineage>
        <taxon>Bacteria</taxon>
        <taxon>Pseudomonadati</taxon>
        <taxon>Pseudomonadota</taxon>
        <taxon>Gammaproteobacteria</taxon>
        <taxon>Enterobacterales</taxon>
        <taxon>Morganellaceae</taxon>
        <taxon>Proteus</taxon>
    </lineage>
</organism>
<reference key="1">
    <citation type="journal article" date="2008" name="J. Bacteriol.">
        <title>Complete genome sequence of uropathogenic Proteus mirabilis, a master of both adherence and motility.</title>
        <authorList>
            <person name="Pearson M.M."/>
            <person name="Sebaihia M."/>
            <person name="Churcher C."/>
            <person name="Quail M.A."/>
            <person name="Seshasayee A.S."/>
            <person name="Luscombe N.M."/>
            <person name="Abdellah Z."/>
            <person name="Arrosmith C."/>
            <person name="Atkin B."/>
            <person name="Chillingworth T."/>
            <person name="Hauser H."/>
            <person name="Jagels K."/>
            <person name="Moule S."/>
            <person name="Mungall K."/>
            <person name="Norbertczak H."/>
            <person name="Rabbinowitsch E."/>
            <person name="Walker D."/>
            <person name="Whithead S."/>
            <person name="Thomson N.R."/>
            <person name="Rather P.N."/>
            <person name="Parkhill J."/>
            <person name="Mobley H.L.T."/>
        </authorList>
    </citation>
    <scope>NUCLEOTIDE SEQUENCE [LARGE SCALE GENOMIC DNA]</scope>
    <source>
        <strain>HI4320</strain>
    </source>
</reference>
<proteinExistence type="inferred from homology"/>
<keyword id="KW-0963">Cytoplasm</keyword>
<keyword id="KW-0236">DNA replication inhibitor</keyword>
<keyword id="KW-0238">DNA-binding</keyword>
<keyword id="KW-1185">Reference proteome</keyword>
<gene>
    <name evidence="1" type="primary">seqA</name>
    <name type="ordered locus">PMI0547</name>
</gene>
<accession>B4ESN7</accession>
<feature type="chain" id="PRO_0000413930" description="Negative modulator of initiation of replication">
    <location>
        <begin position="1"/>
        <end position="183"/>
    </location>
</feature>
<feature type="region of interest" description="Interaction with DNA" evidence="1">
    <location>
        <begin position="118"/>
        <end position="122"/>
    </location>
</feature>
<protein>
    <recommendedName>
        <fullName evidence="1">Negative modulator of initiation of replication</fullName>
    </recommendedName>
</protein>